<organism>
    <name type="scientific">Clostridium botulinum (strain Alaska E43 / Type E3)</name>
    <dbReference type="NCBI Taxonomy" id="508767"/>
    <lineage>
        <taxon>Bacteria</taxon>
        <taxon>Bacillati</taxon>
        <taxon>Bacillota</taxon>
        <taxon>Clostridia</taxon>
        <taxon>Eubacteriales</taxon>
        <taxon>Clostridiaceae</taxon>
        <taxon>Clostridium</taxon>
    </lineage>
</organism>
<feature type="chain" id="PRO_1000211978" description="Methylglyoxal synthase">
    <location>
        <begin position="1"/>
        <end position="119"/>
    </location>
</feature>
<feature type="domain" description="MGS-like" evidence="1">
    <location>
        <begin position="1"/>
        <end position="119"/>
    </location>
</feature>
<feature type="active site" description="Proton donor/acceptor" evidence="1">
    <location>
        <position position="60"/>
    </location>
</feature>
<feature type="binding site" evidence="1">
    <location>
        <position position="8"/>
    </location>
    <ligand>
        <name>substrate</name>
    </ligand>
</feature>
<feature type="binding site" evidence="1">
    <location>
        <position position="12"/>
    </location>
    <ligand>
        <name>substrate</name>
    </ligand>
</feature>
<feature type="binding site" evidence="1">
    <location>
        <begin position="34"/>
        <end position="37"/>
    </location>
    <ligand>
        <name>substrate</name>
    </ligand>
</feature>
<feature type="binding site" evidence="1">
    <location>
        <begin position="54"/>
        <end position="55"/>
    </location>
    <ligand>
        <name>substrate</name>
    </ligand>
</feature>
<feature type="binding site" evidence="1">
    <location>
        <position position="87"/>
    </location>
    <ligand>
        <name>substrate</name>
    </ligand>
</feature>
<dbReference type="EC" id="4.2.3.3" evidence="1"/>
<dbReference type="EMBL" id="CP001078">
    <property type="protein sequence ID" value="ACD53023.1"/>
    <property type="molecule type" value="Genomic_DNA"/>
</dbReference>
<dbReference type="RefSeq" id="WP_012451021.1">
    <property type="nucleotide sequence ID" value="NC_010723.1"/>
</dbReference>
<dbReference type="SMR" id="B2V099"/>
<dbReference type="KEGG" id="cbt:CLH_0556"/>
<dbReference type="HOGENOM" id="CLU_120420_1_0_9"/>
<dbReference type="GO" id="GO:0005829">
    <property type="term" value="C:cytosol"/>
    <property type="evidence" value="ECO:0007669"/>
    <property type="project" value="TreeGrafter"/>
</dbReference>
<dbReference type="GO" id="GO:0008929">
    <property type="term" value="F:methylglyoxal synthase activity"/>
    <property type="evidence" value="ECO:0007669"/>
    <property type="project" value="UniProtKB-UniRule"/>
</dbReference>
<dbReference type="GO" id="GO:0019242">
    <property type="term" value="P:methylglyoxal biosynthetic process"/>
    <property type="evidence" value="ECO:0007669"/>
    <property type="project" value="UniProtKB-UniRule"/>
</dbReference>
<dbReference type="CDD" id="cd01422">
    <property type="entry name" value="MGS"/>
    <property type="match status" value="1"/>
</dbReference>
<dbReference type="Gene3D" id="3.40.50.1380">
    <property type="entry name" value="Methylglyoxal synthase-like domain"/>
    <property type="match status" value="1"/>
</dbReference>
<dbReference type="HAMAP" id="MF_00549">
    <property type="entry name" value="Methylglyoxal_synth"/>
    <property type="match status" value="1"/>
</dbReference>
<dbReference type="InterPro" id="IPR004363">
    <property type="entry name" value="Methylgl_synth"/>
</dbReference>
<dbReference type="InterPro" id="IPR018148">
    <property type="entry name" value="Methylglyoxal_synth_AS"/>
</dbReference>
<dbReference type="InterPro" id="IPR011607">
    <property type="entry name" value="MGS-like_dom"/>
</dbReference>
<dbReference type="InterPro" id="IPR036914">
    <property type="entry name" value="MGS-like_dom_sf"/>
</dbReference>
<dbReference type="NCBIfam" id="TIGR00160">
    <property type="entry name" value="MGSA"/>
    <property type="match status" value="1"/>
</dbReference>
<dbReference type="NCBIfam" id="NF003559">
    <property type="entry name" value="PRK05234.1"/>
    <property type="match status" value="1"/>
</dbReference>
<dbReference type="PANTHER" id="PTHR30492">
    <property type="entry name" value="METHYLGLYOXAL SYNTHASE"/>
    <property type="match status" value="1"/>
</dbReference>
<dbReference type="PANTHER" id="PTHR30492:SF0">
    <property type="entry name" value="METHYLGLYOXAL SYNTHASE"/>
    <property type="match status" value="1"/>
</dbReference>
<dbReference type="Pfam" id="PF02142">
    <property type="entry name" value="MGS"/>
    <property type="match status" value="1"/>
</dbReference>
<dbReference type="PIRSF" id="PIRSF006614">
    <property type="entry name" value="Methylglyox_syn"/>
    <property type="match status" value="1"/>
</dbReference>
<dbReference type="SMART" id="SM00851">
    <property type="entry name" value="MGS"/>
    <property type="match status" value="1"/>
</dbReference>
<dbReference type="SUPFAM" id="SSF52335">
    <property type="entry name" value="Methylglyoxal synthase-like"/>
    <property type="match status" value="1"/>
</dbReference>
<dbReference type="PROSITE" id="PS01335">
    <property type="entry name" value="METHYLGLYOXAL_SYNTH"/>
    <property type="match status" value="1"/>
</dbReference>
<dbReference type="PROSITE" id="PS51855">
    <property type="entry name" value="MGS"/>
    <property type="match status" value="1"/>
</dbReference>
<evidence type="ECO:0000255" key="1">
    <source>
        <dbReference type="HAMAP-Rule" id="MF_00549"/>
    </source>
</evidence>
<gene>
    <name evidence="1" type="primary">mgsA</name>
    <name type="ordered locus">CLH_0556</name>
</gene>
<keyword id="KW-0456">Lyase</keyword>
<accession>B2V099</accession>
<reference key="1">
    <citation type="submission" date="2008-05" db="EMBL/GenBank/DDBJ databases">
        <title>Complete genome sequence of Clostridium botulinum E3 str. Alaska E43.</title>
        <authorList>
            <person name="Brinkac L.M."/>
            <person name="Brown J.L."/>
            <person name="Bruce D."/>
            <person name="Detter C."/>
            <person name="Munk C."/>
            <person name="Smith L.A."/>
            <person name="Smith T.J."/>
            <person name="Sutton G."/>
            <person name="Brettin T.S."/>
        </authorList>
    </citation>
    <scope>NUCLEOTIDE SEQUENCE [LARGE SCALE GENOMIC DNA]</scope>
    <source>
        <strain>Alaska E43 / Type E3</strain>
    </source>
</reference>
<comment type="function">
    <text evidence="1">Catalyzes the formation of methylglyoxal from dihydroxyacetone phosphate.</text>
</comment>
<comment type="catalytic activity">
    <reaction evidence="1">
        <text>dihydroxyacetone phosphate = methylglyoxal + phosphate</text>
        <dbReference type="Rhea" id="RHEA:17937"/>
        <dbReference type="ChEBI" id="CHEBI:17158"/>
        <dbReference type="ChEBI" id="CHEBI:43474"/>
        <dbReference type="ChEBI" id="CHEBI:57642"/>
        <dbReference type="EC" id="4.2.3.3"/>
    </reaction>
</comment>
<comment type="similarity">
    <text evidence="1">Belongs to the methylglyoxal synthase family.</text>
</comment>
<sequence>MRIALIAHDKKKQDIIEFAKRNKETLEKYELLATGTTGKMISEETGLNIKRYLSGPYGGDQQIGGRIAEGTIGLVIFFRDPLTAQPHEPDVSALLRVCDVHNIPVVTNSGTADLIIRQF</sequence>
<proteinExistence type="inferred from homology"/>
<name>MGSA_CLOBA</name>
<protein>
    <recommendedName>
        <fullName evidence="1">Methylglyoxal synthase</fullName>
        <shortName evidence="1">MGS</shortName>
        <ecNumber evidence="1">4.2.3.3</ecNumber>
    </recommendedName>
</protein>